<organism>
    <name type="scientific">Wigglesworthia glossinidia brevipalpis</name>
    <dbReference type="NCBI Taxonomy" id="36870"/>
    <lineage>
        <taxon>Bacteria</taxon>
        <taxon>Pseudomonadati</taxon>
        <taxon>Pseudomonadota</taxon>
        <taxon>Gammaproteobacteria</taxon>
        <taxon>Enterobacterales</taxon>
        <taxon>Erwiniaceae</taxon>
        <taxon>Wigglesworthia</taxon>
    </lineage>
</organism>
<evidence type="ECO:0000255" key="1">
    <source>
        <dbReference type="HAMAP-Rule" id="MF_00385"/>
    </source>
</evidence>
<evidence type="ECO:0000305" key="2"/>
<gene>
    <name evidence="1" type="primary">rpsP</name>
    <name type="ordered locus">WIGBR2490</name>
</gene>
<keyword id="KW-1185">Reference proteome</keyword>
<keyword id="KW-0687">Ribonucleoprotein</keyword>
<keyword id="KW-0689">Ribosomal protein</keyword>
<name>RS16_WIGBR</name>
<protein>
    <recommendedName>
        <fullName evidence="1">Small ribosomal subunit protein bS16</fullName>
    </recommendedName>
    <alternativeName>
        <fullName evidence="2">30S ribosomal protein S16</fullName>
    </alternativeName>
</protein>
<accession>Q8D2V3</accession>
<comment type="similarity">
    <text evidence="1">Belongs to the bacterial ribosomal protein bS16 family.</text>
</comment>
<feature type="chain" id="PRO_0000167282" description="Small ribosomal subunit protein bS16">
    <location>
        <begin position="1"/>
        <end position="80"/>
    </location>
</feature>
<dbReference type="EMBL" id="BA000021">
    <property type="protein sequence ID" value="BAC24395.1"/>
    <property type="molecule type" value="Genomic_DNA"/>
</dbReference>
<dbReference type="SMR" id="Q8D2V3"/>
<dbReference type="STRING" id="36870.gene:10368742"/>
<dbReference type="KEGG" id="wbr:rpsP"/>
<dbReference type="eggNOG" id="COG0228">
    <property type="taxonomic scope" value="Bacteria"/>
</dbReference>
<dbReference type="HOGENOM" id="CLU_100590_5_1_6"/>
<dbReference type="OrthoDB" id="9807878at2"/>
<dbReference type="Proteomes" id="UP000000562">
    <property type="component" value="Chromosome"/>
</dbReference>
<dbReference type="GO" id="GO:0005737">
    <property type="term" value="C:cytoplasm"/>
    <property type="evidence" value="ECO:0007669"/>
    <property type="project" value="UniProtKB-ARBA"/>
</dbReference>
<dbReference type="GO" id="GO:0015935">
    <property type="term" value="C:small ribosomal subunit"/>
    <property type="evidence" value="ECO:0007669"/>
    <property type="project" value="TreeGrafter"/>
</dbReference>
<dbReference type="GO" id="GO:0003735">
    <property type="term" value="F:structural constituent of ribosome"/>
    <property type="evidence" value="ECO:0007669"/>
    <property type="project" value="InterPro"/>
</dbReference>
<dbReference type="GO" id="GO:0006412">
    <property type="term" value="P:translation"/>
    <property type="evidence" value="ECO:0007669"/>
    <property type="project" value="UniProtKB-UniRule"/>
</dbReference>
<dbReference type="Gene3D" id="3.30.1320.10">
    <property type="match status" value="1"/>
</dbReference>
<dbReference type="HAMAP" id="MF_00385">
    <property type="entry name" value="Ribosomal_bS16"/>
    <property type="match status" value="1"/>
</dbReference>
<dbReference type="InterPro" id="IPR000307">
    <property type="entry name" value="Ribosomal_bS16"/>
</dbReference>
<dbReference type="InterPro" id="IPR023803">
    <property type="entry name" value="Ribosomal_bS16_dom_sf"/>
</dbReference>
<dbReference type="NCBIfam" id="TIGR00002">
    <property type="entry name" value="S16"/>
    <property type="match status" value="1"/>
</dbReference>
<dbReference type="PANTHER" id="PTHR12919">
    <property type="entry name" value="30S RIBOSOMAL PROTEIN S16"/>
    <property type="match status" value="1"/>
</dbReference>
<dbReference type="PANTHER" id="PTHR12919:SF20">
    <property type="entry name" value="SMALL RIBOSOMAL SUBUNIT PROTEIN BS16M"/>
    <property type="match status" value="1"/>
</dbReference>
<dbReference type="Pfam" id="PF00886">
    <property type="entry name" value="Ribosomal_S16"/>
    <property type="match status" value="1"/>
</dbReference>
<dbReference type="SUPFAM" id="SSF54565">
    <property type="entry name" value="Ribosomal protein S16"/>
    <property type="match status" value="1"/>
</dbReference>
<sequence length="80" mass="9438">MVIIRLSRKGSKNKPFYQIVASDNRKPRDGKFIEKLGFFNPISIEKSKKIFIKTDRINLWMSKGAKLSDRVKNLLHKYKK</sequence>
<proteinExistence type="inferred from homology"/>
<reference key="1">
    <citation type="journal article" date="2002" name="Nat. Genet.">
        <title>Genome sequence of the endocellular obligate symbiont of tsetse flies, Wigglesworthia glossinidia.</title>
        <authorList>
            <person name="Akman L."/>
            <person name="Yamashita A."/>
            <person name="Watanabe H."/>
            <person name="Oshima K."/>
            <person name="Shiba T."/>
            <person name="Hattori M."/>
            <person name="Aksoy S."/>
        </authorList>
    </citation>
    <scope>NUCLEOTIDE SEQUENCE [LARGE SCALE GENOMIC DNA]</scope>
</reference>